<name>GATA_BURP0</name>
<gene>
    <name evidence="1" type="primary">gatA</name>
    <name type="ordered locus">BURPS1106A_0183</name>
</gene>
<comment type="function">
    <text evidence="1">Allows the formation of correctly charged Gln-tRNA(Gln) through the transamidation of misacylated Glu-tRNA(Gln) in organisms which lack glutaminyl-tRNA synthetase. The reaction takes place in the presence of glutamine and ATP through an activated gamma-phospho-Glu-tRNA(Gln).</text>
</comment>
<comment type="catalytic activity">
    <reaction evidence="1">
        <text>L-glutamyl-tRNA(Gln) + L-glutamine + ATP + H2O = L-glutaminyl-tRNA(Gln) + L-glutamate + ADP + phosphate + H(+)</text>
        <dbReference type="Rhea" id="RHEA:17521"/>
        <dbReference type="Rhea" id="RHEA-COMP:9681"/>
        <dbReference type="Rhea" id="RHEA-COMP:9684"/>
        <dbReference type="ChEBI" id="CHEBI:15377"/>
        <dbReference type="ChEBI" id="CHEBI:15378"/>
        <dbReference type="ChEBI" id="CHEBI:29985"/>
        <dbReference type="ChEBI" id="CHEBI:30616"/>
        <dbReference type="ChEBI" id="CHEBI:43474"/>
        <dbReference type="ChEBI" id="CHEBI:58359"/>
        <dbReference type="ChEBI" id="CHEBI:78520"/>
        <dbReference type="ChEBI" id="CHEBI:78521"/>
        <dbReference type="ChEBI" id="CHEBI:456216"/>
        <dbReference type="EC" id="6.3.5.7"/>
    </reaction>
</comment>
<comment type="subunit">
    <text evidence="1">Heterotrimer of A, B and C subunits.</text>
</comment>
<comment type="similarity">
    <text evidence="1">Belongs to the amidase family. GatA subfamily.</text>
</comment>
<evidence type="ECO:0000255" key="1">
    <source>
        <dbReference type="HAMAP-Rule" id="MF_00120"/>
    </source>
</evidence>
<keyword id="KW-0067">ATP-binding</keyword>
<keyword id="KW-0436">Ligase</keyword>
<keyword id="KW-0547">Nucleotide-binding</keyword>
<keyword id="KW-0648">Protein biosynthesis</keyword>
<reference key="1">
    <citation type="journal article" date="2010" name="Genome Biol. Evol.">
        <title>Continuing evolution of Burkholderia mallei through genome reduction and large-scale rearrangements.</title>
        <authorList>
            <person name="Losada L."/>
            <person name="Ronning C.M."/>
            <person name="DeShazer D."/>
            <person name="Woods D."/>
            <person name="Fedorova N."/>
            <person name="Kim H.S."/>
            <person name="Shabalina S.A."/>
            <person name="Pearson T.R."/>
            <person name="Brinkac L."/>
            <person name="Tan P."/>
            <person name="Nandi T."/>
            <person name="Crabtree J."/>
            <person name="Badger J."/>
            <person name="Beckstrom-Sternberg S."/>
            <person name="Saqib M."/>
            <person name="Schutzer S.E."/>
            <person name="Keim P."/>
            <person name="Nierman W.C."/>
        </authorList>
    </citation>
    <scope>NUCLEOTIDE SEQUENCE [LARGE SCALE GENOMIC DNA]</scope>
    <source>
        <strain>1106a</strain>
    </source>
</reference>
<accession>A3NQ45</accession>
<organism>
    <name type="scientific">Burkholderia pseudomallei (strain 1106a)</name>
    <dbReference type="NCBI Taxonomy" id="357348"/>
    <lineage>
        <taxon>Bacteria</taxon>
        <taxon>Pseudomonadati</taxon>
        <taxon>Pseudomonadota</taxon>
        <taxon>Betaproteobacteria</taxon>
        <taxon>Burkholderiales</taxon>
        <taxon>Burkholderiaceae</taxon>
        <taxon>Burkholderia</taxon>
        <taxon>pseudomallei group</taxon>
    </lineage>
</organism>
<dbReference type="EC" id="6.3.5.7" evidence="1"/>
<dbReference type="EMBL" id="CP000572">
    <property type="protein sequence ID" value="ABN92334.1"/>
    <property type="molecule type" value="Genomic_DNA"/>
</dbReference>
<dbReference type="RefSeq" id="WP_004525859.1">
    <property type="nucleotide sequence ID" value="NC_009076.1"/>
</dbReference>
<dbReference type="SMR" id="A3NQ45"/>
<dbReference type="GeneID" id="93058696"/>
<dbReference type="KEGG" id="bpl:BURPS1106A_0183"/>
<dbReference type="HOGENOM" id="CLU_009600_0_3_4"/>
<dbReference type="Proteomes" id="UP000006738">
    <property type="component" value="Chromosome I"/>
</dbReference>
<dbReference type="GO" id="GO:0030956">
    <property type="term" value="C:glutamyl-tRNA(Gln) amidotransferase complex"/>
    <property type="evidence" value="ECO:0007669"/>
    <property type="project" value="InterPro"/>
</dbReference>
<dbReference type="GO" id="GO:0005524">
    <property type="term" value="F:ATP binding"/>
    <property type="evidence" value="ECO:0007669"/>
    <property type="project" value="UniProtKB-KW"/>
</dbReference>
<dbReference type="GO" id="GO:0050567">
    <property type="term" value="F:glutaminyl-tRNA synthase (glutamine-hydrolyzing) activity"/>
    <property type="evidence" value="ECO:0007669"/>
    <property type="project" value="UniProtKB-UniRule"/>
</dbReference>
<dbReference type="GO" id="GO:0006412">
    <property type="term" value="P:translation"/>
    <property type="evidence" value="ECO:0007669"/>
    <property type="project" value="UniProtKB-UniRule"/>
</dbReference>
<dbReference type="Gene3D" id="3.90.1300.10">
    <property type="entry name" value="Amidase signature (AS) domain"/>
    <property type="match status" value="1"/>
</dbReference>
<dbReference type="HAMAP" id="MF_00120">
    <property type="entry name" value="GatA"/>
    <property type="match status" value="1"/>
</dbReference>
<dbReference type="InterPro" id="IPR000120">
    <property type="entry name" value="Amidase"/>
</dbReference>
<dbReference type="InterPro" id="IPR020556">
    <property type="entry name" value="Amidase_CS"/>
</dbReference>
<dbReference type="InterPro" id="IPR023631">
    <property type="entry name" value="Amidase_dom"/>
</dbReference>
<dbReference type="InterPro" id="IPR036928">
    <property type="entry name" value="AS_sf"/>
</dbReference>
<dbReference type="InterPro" id="IPR004412">
    <property type="entry name" value="GatA"/>
</dbReference>
<dbReference type="NCBIfam" id="TIGR00132">
    <property type="entry name" value="gatA"/>
    <property type="match status" value="1"/>
</dbReference>
<dbReference type="PANTHER" id="PTHR11895:SF151">
    <property type="entry name" value="GLUTAMYL-TRNA(GLN) AMIDOTRANSFERASE SUBUNIT A"/>
    <property type="match status" value="1"/>
</dbReference>
<dbReference type="PANTHER" id="PTHR11895">
    <property type="entry name" value="TRANSAMIDASE"/>
    <property type="match status" value="1"/>
</dbReference>
<dbReference type="Pfam" id="PF01425">
    <property type="entry name" value="Amidase"/>
    <property type="match status" value="1"/>
</dbReference>
<dbReference type="SUPFAM" id="SSF75304">
    <property type="entry name" value="Amidase signature (AS) enzymes"/>
    <property type="match status" value="1"/>
</dbReference>
<dbReference type="PROSITE" id="PS00571">
    <property type="entry name" value="AMIDASES"/>
    <property type="match status" value="1"/>
</dbReference>
<feature type="chain" id="PRO_1000015811" description="Glutamyl-tRNA(Gln) amidotransferase subunit A">
    <location>
        <begin position="1"/>
        <end position="496"/>
    </location>
</feature>
<feature type="active site" description="Charge relay system" evidence="1">
    <location>
        <position position="75"/>
    </location>
</feature>
<feature type="active site" description="Charge relay system" evidence="1">
    <location>
        <position position="150"/>
    </location>
</feature>
<feature type="active site" description="Acyl-ester intermediate" evidence="1">
    <location>
        <position position="174"/>
    </location>
</feature>
<protein>
    <recommendedName>
        <fullName evidence="1">Glutamyl-tRNA(Gln) amidotransferase subunit A</fullName>
        <shortName evidence="1">Glu-ADT subunit A</shortName>
        <ecNumber evidence="1">6.3.5.7</ecNumber>
    </recommendedName>
</protein>
<proteinExistence type="inferred from homology"/>
<sequence length="496" mass="52236">MHAKSLTELRAALDAKECSAVELAQHYLKRIDAARDLNAFVHVDAELTLAQAKAADAALANGEAGPLAGLPIAHKDVFVTRGWRSTAGSKMLANYASPFDATVVARLSAAGMVTLGKTNMDEFAMGSSNENSAFGPVKNPWDTSAVPGGSSGGSSAAVAARLAPAATGTDTGGSIRQPASFAGVTGIKPTYGRVSRYGMIAFASSLDQGGPMARSAADCALLLNAMAGFDERDSTSLERADEDYTRHLGKAWAAGGDAGKPLAGLRIGLPAEYFGAGLADDVRAAIDAALKTYEALGATLVPVSLPKTELSIPVYYVIAPAEASSNLSRFDGVRYGHRAAEYRDLLDMYKKSRAEGFGPEVKRRILVGTYVLSHGYYDAYYLQAQKIRRIIAQDFQEAFKSCDVIMGPASPTVAWDIGAKGDDPVQMYLADIYTLSVSLAGLPGMSVPCGFGAGANAKRPVGLQIIGNYFDEARMLQVADAFQRATDWHVQEPAGV</sequence>